<evidence type="ECO:0000255" key="1"/>
<evidence type="ECO:0000305" key="2"/>
<proteinExistence type="inferred from homology"/>
<reference key="1">
    <citation type="journal article" date="1999" name="Nature">
        <title>Sequence and analysis of chromosome 2 of the plant Arabidopsis thaliana.</title>
        <authorList>
            <person name="Lin X."/>
            <person name="Kaul S."/>
            <person name="Rounsley S.D."/>
            <person name="Shea T.P."/>
            <person name="Benito M.-I."/>
            <person name="Town C.D."/>
            <person name="Fujii C.Y."/>
            <person name="Mason T.M."/>
            <person name="Bowman C.L."/>
            <person name="Barnstead M.E."/>
            <person name="Feldblyum T.V."/>
            <person name="Buell C.R."/>
            <person name="Ketchum K.A."/>
            <person name="Lee J.J."/>
            <person name="Ronning C.M."/>
            <person name="Koo H.L."/>
            <person name="Moffat K.S."/>
            <person name="Cronin L.A."/>
            <person name="Shen M."/>
            <person name="Pai G."/>
            <person name="Van Aken S."/>
            <person name="Umayam L."/>
            <person name="Tallon L.J."/>
            <person name="Gill J.E."/>
            <person name="Adams M.D."/>
            <person name="Carrera A.J."/>
            <person name="Creasy T.H."/>
            <person name="Goodman H.M."/>
            <person name="Somerville C.R."/>
            <person name="Copenhaver G.P."/>
            <person name="Preuss D."/>
            <person name="Nierman W.C."/>
            <person name="White O."/>
            <person name="Eisen J.A."/>
            <person name="Salzberg S.L."/>
            <person name="Fraser C.M."/>
            <person name="Venter J.C."/>
        </authorList>
    </citation>
    <scope>NUCLEOTIDE SEQUENCE [LARGE SCALE GENOMIC DNA]</scope>
    <source>
        <strain>cv. Columbia</strain>
    </source>
</reference>
<reference key="2">
    <citation type="journal article" date="2017" name="Plant J.">
        <title>Araport11: a complete reannotation of the Arabidopsis thaliana reference genome.</title>
        <authorList>
            <person name="Cheng C.Y."/>
            <person name="Krishnakumar V."/>
            <person name="Chan A.P."/>
            <person name="Thibaud-Nissen F."/>
            <person name="Schobel S."/>
            <person name="Town C.D."/>
        </authorList>
    </citation>
    <scope>GENOME REANNOTATION</scope>
    <source>
        <strain>cv. Columbia</strain>
    </source>
</reference>
<reference key="3">
    <citation type="journal article" date="2000" name="Plant Physiol.">
        <title>The cellulose synthase superfamily.</title>
        <authorList>
            <person name="Richmond T.A."/>
            <person name="Somerville C.R."/>
        </authorList>
    </citation>
    <scope>GENE FAMILY</scope>
    <scope>NOMENCLATURE</scope>
</reference>
<sequence>MAESSSPLPPLCERISHKSYFLRAVDLTILGLLLSLLLYRILHVNQKDTVWIVAFLCETCFTFVWLLITNIKWSPADYKTYPERLDERVHELPPVDMFVTTADPVREPPLIVVNTVLSLLAVNYPANKLACYVSDDGCSPLTYFSLKEASKFAKIWVPFCKKYNVRVRAPFMYFRNSPEAAEGSEFSKDWEMTKREYEKLSQKVEDATGSSHWLDAEDDFEAFLNTKSNDHSTIVKVVWENKGGVGDEKEVPHVVYISREKRPNHFHHYKAGAMNFLVRVSGLMTNAPYMLNVDCDMYVNEADVVRQAMCIFLQKSMDSNHCAFVQYPQDFYDSNVGELTVLQLYLGRGIAGIQGPQYAGSGCFHTRRVMYGLSLDDLGDDGSLSSIATRKYLAEESLTREFGNSKEMVKSVVDALQRKPFPQKNLKDSLETAQEMGHCHYEYQTSWGKNIGWLYDSTTEDVNTSIGIHSRGWTSSYIFPDPPAFLGCMPQGGPEVMVQQRRWATGLLEILFNKQSPLIGMFCRKIRFRQSLAYLYVFSWGLRSIPELFYCLLPAYCLLHNSALFPKGVYLGIIITLVGIHCLYTLWEFMNLGFSIQSWYVTQSFGRIKTTCSWLFSVLDVILKLLGISKTVFIVTKKTMPETKSGSGSKKSQREVDCPNQDSGKFEFDGSLYFLPGTFIVLVNLAALAGCLVGLQSRGGGGSGLAEACGCILVVILFLPFLKGMFEKGKYGIPFSTLSKAAFLAALFVVLSVGN</sequence>
<dbReference type="EC" id="2.4.1.-"/>
<dbReference type="EMBL" id="AC004681">
    <property type="protein sequence ID" value="AAC25936.1"/>
    <property type="molecule type" value="Genomic_DNA"/>
</dbReference>
<dbReference type="EMBL" id="CP002685">
    <property type="protein sequence ID" value="AEC08698.1"/>
    <property type="molecule type" value="Genomic_DNA"/>
</dbReference>
<dbReference type="PIR" id="T02553">
    <property type="entry name" value="T02553"/>
</dbReference>
<dbReference type="SMR" id="O80891"/>
<dbReference type="FunCoup" id="O80891">
    <property type="interactions" value="315"/>
</dbReference>
<dbReference type="STRING" id="3702.O80891"/>
<dbReference type="CAZy" id="GT2">
    <property type="family name" value="Glycosyltransferase Family 2"/>
</dbReference>
<dbReference type="iPTMnet" id="O80891"/>
<dbReference type="PaxDb" id="3702-AT2G32540.1"/>
<dbReference type="ProteomicsDB" id="222662"/>
<dbReference type="EnsemblPlants" id="AT2G32540.1">
    <property type="protein sequence ID" value="AT2G32540.1"/>
    <property type="gene ID" value="AT2G32540"/>
</dbReference>
<dbReference type="GeneID" id="817815"/>
<dbReference type="Gramene" id="AT2G32540.1">
    <property type="protein sequence ID" value="AT2G32540.1"/>
    <property type="gene ID" value="AT2G32540"/>
</dbReference>
<dbReference type="KEGG" id="ath:AT2G32540"/>
<dbReference type="Araport" id="AT2G32540"/>
<dbReference type="TAIR" id="AT2G32540">
    <property type="gene designation" value="CSLB04"/>
</dbReference>
<dbReference type="eggNOG" id="ENOG502QTT0">
    <property type="taxonomic scope" value="Eukaryota"/>
</dbReference>
<dbReference type="HOGENOM" id="CLU_001418_3_3_1"/>
<dbReference type="InParanoid" id="O80891"/>
<dbReference type="OMA" id="HERFEHK"/>
<dbReference type="PhylomeDB" id="O80891"/>
<dbReference type="BioCyc" id="ARA:AT2G32540-MONOMER"/>
<dbReference type="PRO" id="PR:O80891"/>
<dbReference type="Proteomes" id="UP000006548">
    <property type="component" value="Chromosome 2"/>
</dbReference>
<dbReference type="ExpressionAtlas" id="O80891">
    <property type="expression patterns" value="baseline and differential"/>
</dbReference>
<dbReference type="GO" id="GO:0000139">
    <property type="term" value="C:Golgi membrane"/>
    <property type="evidence" value="ECO:0007669"/>
    <property type="project" value="UniProtKB-SubCell"/>
</dbReference>
<dbReference type="GO" id="GO:0016760">
    <property type="term" value="F:cellulose synthase (UDP-forming) activity"/>
    <property type="evidence" value="ECO:0007669"/>
    <property type="project" value="InterPro"/>
</dbReference>
<dbReference type="GO" id="GO:0071555">
    <property type="term" value="P:cell wall organization"/>
    <property type="evidence" value="ECO:0007669"/>
    <property type="project" value="UniProtKB-KW"/>
</dbReference>
<dbReference type="GO" id="GO:0030244">
    <property type="term" value="P:cellulose biosynthetic process"/>
    <property type="evidence" value="ECO:0007669"/>
    <property type="project" value="InterPro"/>
</dbReference>
<dbReference type="FunFam" id="3.90.550.10:FF:000162">
    <property type="entry name" value="Cellulose synthase-like B6"/>
    <property type="match status" value="1"/>
</dbReference>
<dbReference type="Gene3D" id="3.90.550.10">
    <property type="entry name" value="Spore Coat Polysaccharide Biosynthesis Protein SpsA, Chain A"/>
    <property type="match status" value="1"/>
</dbReference>
<dbReference type="InterPro" id="IPR005150">
    <property type="entry name" value="Cellulose_synth"/>
</dbReference>
<dbReference type="InterPro" id="IPR029044">
    <property type="entry name" value="Nucleotide-diphossugar_trans"/>
</dbReference>
<dbReference type="PANTHER" id="PTHR13301">
    <property type="entry name" value="X-BOX TRANSCRIPTION FACTOR-RELATED"/>
    <property type="match status" value="1"/>
</dbReference>
<dbReference type="Pfam" id="PF03552">
    <property type="entry name" value="Cellulose_synt"/>
    <property type="match status" value="2"/>
</dbReference>
<dbReference type="SUPFAM" id="SSF53448">
    <property type="entry name" value="Nucleotide-diphospho-sugar transferases"/>
    <property type="match status" value="1"/>
</dbReference>
<name>CSLB4_ARATH</name>
<comment type="function">
    <text>Thought to be a Golgi-localized beta-glycan synthase that polymerize the backbones of noncellulosic polysaccharides (hemicelluloses) of plant cell wall.</text>
</comment>
<comment type="subcellular location">
    <subcellularLocation>
        <location evidence="2">Golgi apparatus membrane</location>
        <topology evidence="2">Multi-pass membrane protein</topology>
    </subcellularLocation>
</comment>
<comment type="similarity">
    <text evidence="2">Belongs to the glycosyltransferase 2 family. Plant cellulose synthase-like B subfamily.</text>
</comment>
<feature type="chain" id="PRO_0000319338" description="Cellulose synthase-like protein B4">
    <location>
        <begin position="1"/>
        <end position="755"/>
    </location>
</feature>
<feature type="transmembrane region" description="Helical" evidence="1">
    <location>
        <begin position="24"/>
        <end position="44"/>
    </location>
</feature>
<feature type="transmembrane region" description="Helical" evidence="1">
    <location>
        <begin position="49"/>
        <end position="69"/>
    </location>
</feature>
<feature type="transmembrane region" description="Helical" evidence="1">
    <location>
        <begin position="533"/>
        <end position="556"/>
    </location>
</feature>
<feature type="transmembrane region" description="Helical" evidence="1">
    <location>
        <begin position="569"/>
        <end position="589"/>
    </location>
</feature>
<feature type="transmembrane region" description="Helical" evidence="1">
    <location>
        <begin position="615"/>
        <end position="635"/>
    </location>
</feature>
<feature type="transmembrane region" description="Helical" evidence="1">
    <location>
        <begin position="674"/>
        <end position="694"/>
    </location>
</feature>
<feature type="transmembrane region" description="Helical" evidence="1">
    <location>
        <begin position="702"/>
        <end position="722"/>
    </location>
</feature>
<feature type="transmembrane region" description="Helical" evidence="1">
    <location>
        <begin position="733"/>
        <end position="753"/>
    </location>
</feature>
<feature type="active site" evidence="1">
    <location>
        <position position="136"/>
    </location>
</feature>
<feature type="active site" evidence="1">
    <location>
        <position position="461"/>
    </location>
</feature>
<gene>
    <name type="primary">CSLB4</name>
    <name type="ordered locus">At2g32540</name>
    <name type="ORF">T26B15.10</name>
</gene>
<accession>O80891</accession>
<organism>
    <name type="scientific">Arabidopsis thaliana</name>
    <name type="common">Mouse-ear cress</name>
    <dbReference type="NCBI Taxonomy" id="3702"/>
    <lineage>
        <taxon>Eukaryota</taxon>
        <taxon>Viridiplantae</taxon>
        <taxon>Streptophyta</taxon>
        <taxon>Embryophyta</taxon>
        <taxon>Tracheophyta</taxon>
        <taxon>Spermatophyta</taxon>
        <taxon>Magnoliopsida</taxon>
        <taxon>eudicotyledons</taxon>
        <taxon>Gunneridae</taxon>
        <taxon>Pentapetalae</taxon>
        <taxon>rosids</taxon>
        <taxon>malvids</taxon>
        <taxon>Brassicales</taxon>
        <taxon>Brassicaceae</taxon>
        <taxon>Camelineae</taxon>
        <taxon>Arabidopsis</taxon>
    </lineage>
</organism>
<protein>
    <recommendedName>
        <fullName>Cellulose synthase-like protein B4</fullName>
        <shortName>AtCslB4</shortName>
        <ecNumber>2.4.1.-</ecNumber>
    </recommendedName>
</protein>
<keyword id="KW-0961">Cell wall biogenesis/degradation</keyword>
<keyword id="KW-0328">Glycosyltransferase</keyword>
<keyword id="KW-0333">Golgi apparatus</keyword>
<keyword id="KW-0472">Membrane</keyword>
<keyword id="KW-1185">Reference proteome</keyword>
<keyword id="KW-0808">Transferase</keyword>
<keyword id="KW-0812">Transmembrane</keyword>
<keyword id="KW-1133">Transmembrane helix</keyword>